<accession>Q2S0V3</accession>
<reference key="1">
    <citation type="journal article" date="2005" name="Proc. Natl. Acad. Sci. U.S.A.">
        <title>The genome of Salinibacter ruber: convergence and gene exchange among hyperhalophilic bacteria and archaea.</title>
        <authorList>
            <person name="Mongodin E.F."/>
            <person name="Nelson K.E."/>
            <person name="Daugherty S."/>
            <person name="DeBoy R.T."/>
            <person name="Wister J."/>
            <person name="Khouri H."/>
            <person name="Weidman J."/>
            <person name="Walsh D.A."/>
            <person name="Papke R.T."/>
            <person name="Sanchez Perez G."/>
            <person name="Sharma A.K."/>
            <person name="Nesbo C.L."/>
            <person name="MacLeod D."/>
            <person name="Bapteste E."/>
            <person name="Doolittle W.F."/>
            <person name="Charlebois R.L."/>
            <person name="Legault B."/>
            <person name="Rodriguez-Valera F."/>
        </authorList>
    </citation>
    <scope>NUCLEOTIDE SEQUENCE [LARGE SCALE GENOMIC DNA]</scope>
    <source>
        <strain>DSM 13855 / CECT 5946 / M31</strain>
    </source>
</reference>
<keyword id="KW-0067">ATP-binding</keyword>
<keyword id="KW-0520">NAD</keyword>
<keyword id="KW-0547">Nucleotide-binding</keyword>
<keyword id="KW-0548">Nucleotidyltransferase</keyword>
<keyword id="KW-0662">Pyridine nucleotide biosynthesis</keyword>
<keyword id="KW-1185">Reference proteome</keyword>
<keyword id="KW-0808">Transferase</keyword>
<evidence type="ECO:0000255" key="1">
    <source>
        <dbReference type="HAMAP-Rule" id="MF_00244"/>
    </source>
</evidence>
<sequence>MTVGLFGGSFNPPHVAHLVVAEVVRDQFGLDEVWWIPNATPPHKPNDELAAVQHRLAMTERTVEGNPAFRVCGVEVERDGVSYTVETLRVLQDQHPDTDFALILGSDSLDHFADWHRPDEIAERVPFIVYKRPGAIESVADPRFVNDVRYAAAPVMEISGTEVRARRRAGRSIRYLVPEAVRAYIDTHDLYRPTD</sequence>
<protein>
    <recommendedName>
        <fullName evidence="1">Probable nicotinate-nucleotide adenylyltransferase</fullName>
        <ecNumber evidence="1">2.7.7.18</ecNumber>
    </recommendedName>
    <alternativeName>
        <fullName evidence="1">Deamido-NAD(+) diphosphorylase</fullName>
    </alternativeName>
    <alternativeName>
        <fullName evidence="1">Deamido-NAD(+) pyrophosphorylase</fullName>
    </alternativeName>
    <alternativeName>
        <fullName evidence="1">Nicotinate mononucleotide adenylyltransferase</fullName>
        <shortName evidence="1">NaMN adenylyltransferase</shortName>
    </alternativeName>
</protein>
<organism>
    <name type="scientific">Salinibacter ruber (strain DSM 13855 / M31)</name>
    <dbReference type="NCBI Taxonomy" id="309807"/>
    <lineage>
        <taxon>Bacteria</taxon>
        <taxon>Pseudomonadati</taxon>
        <taxon>Rhodothermota</taxon>
        <taxon>Rhodothermia</taxon>
        <taxon>Rhodothermales</taxon>
        <taxon>Salinibacteraceae</taxon>
        <taxon>Salinibacter</taxon>
    </lineage>
</organism>
<gene>
    <name evidence="1" type="primary">nadD</name>
    <name type="ordered locus">SRU_2072</name>
</gene>
<name>NADD_SALRD</name>
<proteinExistence type="inferred from homology"/>
<feature type="chain" id="PRO_1000071839" description="Probable nicotinate-nucleotide adenylyltransferase">
    <location>
        <begin position="1"/>
        <end position="195"/>
    </location>
</feature>
<dbReference type="EC" id="2.7.7.18" evidence="1"/>
<dbReference type="EMBL" id="CP000159">
    <property type="protein sequence ID" value="ABC45500.1"/>
    <property type="molecule type" value="Genomic_DNA"/>
</dbReference>
<dbReference type="RefSeq" id="WP_011404800.1">
    <property type="nucleotide sequence ID" value="NC_007677.1"/>
</dbReference>
<dbReference type="RefSeq" id="YP_446178.1">
    <property type="nucleotide sequence ID" value="NC_007677.1"/>
</dbReference>
<dbReference type="SMR" id="Q2S0V3"/>
<dbReference type="STRING" id="309807.SRU_2072"/>
<dbReference type="EnsemblBacteria" id="ABC45500">
    <property type="protein sequence ID" value="ABC45500"/>
    <property type="gene ID" value="SRU_2072"/>
</dbReference>
<dbReference type="GeneID" id="83729015"/>
<dbReference type="KEGG" id="sru:SRU_2072"/>
<dbReference type="PATRIC" id="fig|309807.25.peg.2156"/>
<dbReference type="eggNOG" id="COG1057">
    <property type="taxonomic scope" value="Bacteria"/>
</dbReference>
<dbReference type="HOGENOM" id="CLU_069765_3_1_10"/>
<dbReference type="OrthoDB" id="5295945at2"/>
<dbReference type="UniPathway" id="UPA00253">
    <property type="reaction ID" value="UER00332"/>
</dbReference>
<dbReference type="Proteomes" id="UP000008674">
    <property type="component" value="Chromosome"/>
</dbReference>
<dbReference type="GO" id="GO:0005524">
    <property type="term" value="F:ATP binding"/>
    <property type="evidence" value="ECO:0007669"/>
    <property type="project" value="UniProtKB-KW"/>
</dbReference>
<dbReference type="GO" id="GO:0004515">
    <property type="term" value="F:nicotinate-nucleotide adenylyltransferase activity"/>
    <property type="evidence" value="ECO:0007669"/>
    <property type="project" value="UniProtKB-UniRule"/>
</dbReference>
<dbReference type="GO" id="GO:0009435">
    <property type="term" value="P:NAD biosynthetic process"/>
    <property type="evidence" value="ECO:0007669"/>
    <property type="project" value="UniProtKB-UniRule"/>
</dbReference>
<dbReference type="CDD" id="cd02165">
    <property type="entry name" value="NMNAT"/>
    <property type="match status" value="1"/>
</dbReference>
<dbReference type="Gene3D" id="3.40.50.620">
    <property type="entry name" value="HUPs"/>
    <property type="match status" value="1"/>
</dbReference>
<dbReference type="HAMAP" id="MF_00244">
    <property type="entry name" value="NaMN_adenylyltr"/>
    <property type="match status" value="1"/>
</dbReference>
<dbReference type="InterPro" id="IPR004821">
    <property type="entry name" value="Cyt_trans-like"/>
</dbReference>
<dbReference type="InterPro" id="IPR005248">
    <property type="entry name" value="NadD/NMNAT"/>
</dbReference>
<dbReference type="InterPro" id="IPR014729">
    <property type="entry name" value="Rossmann-like_a/b/a_fold"/>
</dbReference>
<dbReference type="NCBIfam" id="TIGR00125">
    <property type="entry name" value="cyt_tran_rel"/>
    <property type="match status" value="1"/>
</dbReference>
<dbReference type="NCBIfam" id="TIGR00482">
    <property type="entry name" value="nicotinate (nicotinamide) nucleotide adenylyltransferase"/>
    <property type="match status" value="1"/>
</dbReference>
<dbReference type="NCBIfam" id="NF000840">
    <property type="entry name" value="PRK00071.1-3"/>
    <property type="match status" value="1"/>
</dbReference>
<dbReference type="PANTHER" id="PTHR39321">
    <property type="entry name" value="NICOTINATE-NUCLEOTIDE ADENYLYLTRANSFERASE-RELATED"/>
    <property type="match status" value="1"/>
</dbReference>
<dbReference type="PANTHER" id="PTHR39321:SF3">
    <property type="entry name" value="PHOSPHOPANTETHEINE ADENYLYLTRANSFERASE"/>
    <property type="match status" value="1"/>
</dbReference>
<dbReference type="Pfam" id="PF01467">
    <property type="entry name" value="CTP_transf_like"/>
    <property type="match status" value="1"/>
</dbReference>
<dbReference type="SUPFAM" id="SSF52374">
    <property type="entry name" value="Nucleotidylyl transferase"/>
    <property type="match status" value="1"/>
</dbReference>
<comment type="function">
    <text evidence="1">Catalyzes the reversible adenylation of nicotinate mononucleotide (NaMN) to nicotinic acid adenine dinucleotide (NaAD).</text>
</comment>
<comment type="catalytic activity">
    <reaction evidence="1">
        <text>nicotinate beta-D-ribonucleotide + ATP + H(+) = deamido-NAD(+) + diphosphate</text>
        <dbReference type="Rhea" id="RHEA:22860"/>
        <dbReference type="ChEBI" id="CHEBI:15378"/>
        <dbReference type="ChEBI" id="CHEBI:30616"/>
        <dbReference type="ChEBI" id="CHEBI:33019"/>
        <dbReference type="ChEBI" id="CHEBI:57502"/>
        <dbReference type="ChEBI" id="CHEBI:58437"/>
        <dbReference type="EC" id="2.7.7.18"/>
    </reaction>
</comment>
<comment type="pathway">
    <text evidence="1">Cofactor biosynthesis; NAD(+) biosynthesis; deamido-NAD(+) from nicotinate D-ribonucleotide: step 1/1.</text>
</comment>
<comment type="similarity">
    <text evidence="1">Belongs to the NadD family.</text>
</comment>